<accession>P0A8F0</accession>
<accession>P25532</accession>
<accession>P78095</accession>
<accession>Q8XAC7</accession>
<dbReference type="EC" id="2.4.2.9"/>
<dbReference type="EMBL" id="X57104">
    <property type="protein sequence ID" value="CAA40388.1"/>
    <property type="molecule type" value="Genomic_DNA"/>
</dbReference>
<dbReference type="EMBL" id="U00096">
    <property type="protein sequence ID" value="AAC75551.2"/>
    <property type="molecule type" value="Genomic_DNA"/>
</dbReference>
<dbReference type="EMBL" id="AP009048">
    <property type="protein sequence ID" value="BAA16386.1"/>
    <property type="molecule type" value="Genomic_DNA"/>
</dbReference>
<dbReference type="PIR" id="A65026">
    <property type="entry name" value="A65026"/>
</dbReference>
<dbReference type="RefSeq" id="NP_416993.2">
    <property type="nucleotide sequence ID" value="NC_000913.3"/>
</dbReference>
<dbReference type="RefSeq" id="WP_001295473.1">
    <property type="nucleotide sequence ID" value="NZ_STEB01000011.1"/>
</dbReference>
<dbReference type="PDB" id="2EHJ">
    <property type="method" value="X-ray"/>
    <property type="resolution" value="2.80 A"/>
    <property type="chains" value="A/B/C/D=2-208"/>
</dbReference>
<dbReference type="PDBsum" id="2EHJ"/>
<dbReference type="SMR" id="P0A8F0"/>
<dbReference type="BioGRID" id="4261438">
    <property type="interactions" value="35"/>
</dbReference>
<dbReference type="BioGRID" id="851318">
    <property type="interactions" value="1"/>
</dbReference>
<dbReference type="DIP" id="DIP-36228N"/>
<dbReference type="FunCoup" id="P0A8F0">
    <property type="interactions" value="821"/>
</dbReference>
<dbReference type="IntAct" id="P0A8F0">
    <property type="interactions" value="6"/>
</dbReference>
<dbReference type="STRING" id="511145.b2498"/>
<dbReference type="BindingDB" id="P0A8F0"/>
<dbReference type="ChEMBL" id="CHEMBL2233621"/>
<dbReference type="DrugCentral" id="P0A8F0"/>
<dbReference type="jPOST" id="P0A8F0"/>
<dbReference type="PaxDb" id="511145-b2498"/>
<dbReference type="EnsemblBacteria" id="AAC75551">
    <property type="protein sequence ID" value="AAC75551"/>
    <property type="gene ID" value="b2498"/>
</dbReference>
<dbReference type="GeneID" id="93774638"/>
<dbReference type="GeneID" id="946979"/>
<dbReference type="KEGG" id="ecj:JW2483"/>
<dbReference type="KEGG" id="eco:b2498"/>
<dbReference type="KEGG" id="ecoc:C3026_13855"/>
<dbReference type="PATRIC" id="fig|1411691.4.peg.4241"/>
<dbReference type="EchoBASE" id="EB1308"/>
<dbReference type="eggNOG" id="COG0035">
    <property type="taxonomic scope" value="Bacteria"/>
</dbReference>
<dbReference type="HOGENOM" id="CLU_067096_2_2_6"/>
<dbReference type="InParanoid" id="P0A8F0"/>
<dbReference type="OMA" id="KHKIGLM"/>
<dbReference type="OrthoDB" id="9781675at2"/>
<dbReference type="PhylomeDB" id="P0A8F0"/>
<dbReference type="BioCyc" id="EcoCyc:URACIL-PRIBOSYLTRANS-MONOMER"/>
<dbReference type="BioCyc" id="MetaCyc:URACIL-PRIBOSYLTRANS-MONOMER"/>
<dbReference type="BRENDA" id="2.4.2.9">
    <property type="organism ID" value="2026"/>
</dbReference>
<dbReference type="SABIO-RK" id="P0A8F0"/>
<dbReference type="UniPathway" id="UPA00574">
    <property type="reaction ID" value="UER00636"/>
</dbReference>
<dbReference type="EvolutionaryTrace" id="P0A8F0"/>
<dbReference type="PRO" id="PR:P0A8F0"/>
<dbReference type="Proteomes" id="UP000000625">
    <property type="component" value="Chromosome"/>
</dbReference>
<dbReference type="GO" id="GO:0005737">
    <property type="term" value="C:cytoplasm"/>
    <property type="evidence" value="ECO:0000318"/>
    <property type="project" value="GO_Central"/>
</dbReference>
<dbReference type="GO" id="GO:0005829">
    <property type="term" value="C:cytosol"/>
    <property type="evidence" value="ECO:0000314"/>
    <property type="project" value="EcoCyc"/>
</dbReference>
<dbReference type="GO" id="GO:0016020">
    <property type="term" value="C:membrane"/>
    <property type="evidence" value="ECO:0007005"/>
    <property type="project" value="UniProtKB"/>
</dbReference>
<dbReference type="GO" id="GO:0005525">
    <property type="term" value="F:GTP binding"/>
    <property type="evidence" value="ECO:0007669"/>
    <property type="project" value="UniProtKB-KW"/>
</dbReference>
<dbReference type="GO" id="GO:0097216">
    <property type="term" value="F:guanosine tetraphosphate binding"/>
    <property type="evidence" value="ECO:0000314"/>
    <property type="project" value="EcoCyc"/>
</dbReference>
<dbReference type="GO" id="GO:0042802">
    <property type="term" value="F:identical protein binding"/>
    <property type="evidence" value="ECO:0000353"/>
    <property type="project" value="IntAct"/>
</dbReference>
<dbReference type="GO" id="GO:0000287">
    <property type="term" value="F:magnesium ion binding"/>
    <property type="evidence" value="ECO:0007669"/>
    <property type="project" value="UniProtKB-UniRule"/>
</dbReference>
<dbReference type="GO" id="GO:0004845">
    <property type="term" value="F:uracil phosphoribosyltransferase activity"/>
    <property type="evidence" value="ECO:0000314"/>
    <property type="project" value="EcoCyc"/>
</dbReference>
<dbReference type="GO" id="GO:0006206">
    <property type="term" value="P:pyrimidine nucleobase metabolic process"/>
    <property type="evidence" value="ECO:0000269"/>
    <property type="project" value="EcoCyc"/>
</dbReference>
<dbReference type="GO" id="GO:0044206">
    <property type="term" value="P:UMP salvage"/>
    <property type="evidence" value="ECO:0007669"/>
    <property type="project" value="UniProtKB-UniRule"/>
</dbReference>
<dbReference type="GO" id="GO:0006223">
    <property type="term" value="P:uracil salvage"/>
    <property type="evidence" value="ECO:0007669"/>
    <property type="project" value="InterPro"/>
</dbReference>
<dbReference type="CDD" id="cd06223">
    <property type="entry name" value="PRTases_typeI"/>
    <property type="match status" value="1"/>
</dbReference>
<dbReference type="FunFam" id="3.40.50.2020:FF:000003">
    <property type="entry name" value="Uracil phosphoribosyltransferase"/>
    <property type="match status" value="1"/>
</dbReference>
<dbReference type="Gene3D" id="3.40.50.2020">
    <property type="match status" value="1"/>
</dbReference>
<dbReference type="HAMAP" id="MF_01218_B">
    <property type="entry name" value="Upp_B"/>
    <property type="match status" value="1"/>
</dbReference>
<dbReference type="InterPro" id="IPR000836">
    <property type="entry name" value="PRibTrfase_dom"/>
</dbReference>
<dbReference type="InterPro" id="IPR029057">
    <property type="entry name" value="PRTase-like"/>
</dbReference>
<dbReference type="InterPro" id="IPR034332">
    <property type="entry name" value="Upp_B"/>
</dbReference>
<dbReference type="InterPro" id="IPR050054">
    <property type="entry name" value="UPRTase/APRTase"/>
</dbReference>
<dbReference type="InterPro" id="IPR005765">
    <property type="entry name" value="Ura_phspho_trans"/>
</dbReference>
<dbReference type="NCBIfam" id="NF001097">
    <property type="entry name" value="PRK00129.1"/>
    <property type="match status" value="1"/>
</dbReference>
<dbReference type="NCBIfam" id="TIGR01091">
    <property type="entry name" value="upp"/>
    <property type="match status" value="1"/>
</dbReference>
<dbReference type="PANTHER" id="PTHR32315">
    <property type="entry name" value="ADENINE PHOSPHORIBOSYLTRANSFERASE"/>
    <property type="match status" value="1"/>
</dbReference>
<dbReference type="PANTHER" id="PTHR32315:SF4">
    <property type="entry name" value="URACIL PHOSPHORIBOSYLTRANSFERASE, CHLOROPLASTIC"/>
    <property type="match status" value="1"/>
</dbReference>
<dbReference type="Pfam" id="PF14681">
    <property type="entry name" value="UPRTase"/>
    <property type="match status" value="1"/>
</dbReference>
<dbReference type="SUPFAM" id="SSF53271">
    <property type="entry name" value="PRTase-like"/>
    <property type="match status" value="1"/>
</dbReference>
<organism>
    <name type="scientific">Escherichia coli (strain K12)</name>
    <dbReference type="NCBI Taxonomy" id="83333"/>
    <lineage>
        <taxon>Bacteria</taxon>
        <taxon>Pseudomonadati</taxon>
        <taxon>Pseudomonadota</taxon>
        <taxon>Gammaproteobacteria</taxon>
        <taxon>Enterobacterales</taxon>
        <taxon>Enterobacteriaceae</taxon>
        <taxon>Escherichia</taxon>
    </lineage>
</organism>
<protein>
    <recommendedName>
        <fullName>Uracil phosphoribosyltransferase</fullName>
        <ecNumber>2.4.2.9</ecNumber>
    </recommendedName>
    <alternativeName>
        <fullName>UMP pyrophosphorylase</fullName>
    </alternativeName>
    <alternativeName>
        <fullName>UPRTase</fullName>
    </alternativeName>
</protein>
<gene>
    <name type="primary">upp</name>
    <name type="synonym">uraP</name>
    <name type="ordered locus">b2498</name>
    <name type="ordered locus">JW2483</name>
</gene>
<comment type="function">
    <text>Catalyzes the conversion of uracil and 5-phospho-alpha-D-ribose 1-diphosphate (PRPP) to UMP and diphosphate.</text>
</comment>
<comment type="catalytic activity">
    <reaction evidence="3">
        <text>UMP + diphosphate = 5-phospho-alpha-D-ribose 1-diphosphate + uracil</text>
        <dbReference type="Rhea" id="RHEA:13017"/>
        <dbReference type="ChEBI" id="CHEBI:17568"/>
        <dbReference type="ChEBI" id="CHEBI:33019"/>
        <dbReference type="ChEBI" id="CHEBI:57865"/>
        <dbReference type="ChEBI" id="CHEBI:58017"/>
        <dbReference type="EC" id="2.4.2.9"/>
    </reaction>
</comment>
<comment type="cofactor">
    <cofactor>
        <name>Mg(2+)</name>
        <dbReference type="ChEBI" id="CHEBI:18420"/>
    </cofactor>
    <text>Binds 1 Mg(2+) ion per subunit. The magnesium is bound as Mg-PRPP.</text>
</comment>
<comment type="activity regulation">
    <text evidence="3">Allosterically activated by GTP.</text>
</comment>
<comment type="biophysicochemical properties">
    <kinetics>
        <KM evidence="2">0.53 uM for uracil</KM>
        <KM evidence="2">58 uM for 5-phospho-alpha-D-ribose 1-diphosphate</KM>
    </kinetics>
</comment>
<comment type="pathway">
    <text>Pyrimidine metabolism; UMP biosynthesis via salvage pathway; UMP from uracil: step 1/1.</text>
</comment>
<comment type="subunit">
    <text evidence="3">Homodimer or homotrimer in the absence of substrates, and homopentamer or homohexamer in the presence of substrates.</text>
</comment>
<comment type="interaction">
    <interactant intactId="EBI-909572">
        <id>P0A8F0</id>
    </interactant>
    <interactant intactId="EBI-909572">
        <id>P0A8F0</id>
        <label>upp</label>
    </interactant>
    <organismsDiffer>false</organismsDiffer>
    <experiments>5</experiments>
</comment>
<comment type="induction">
    <text>By pyrimidine starvation.</text>
</comment>
<comment type="similarity">
    <text evidence="4">Belongs to the UPRTase family.</text>
</comment>
<keyword id="KW-0002">3D-structure</keyword>
<keyword id="KW-0021">Allosteric enzyme</keyword>
<keyword id="KW-0903">Direct protein sequencing</keyword>
<keyword id="KW-0328">Glycosyltransferase</keyword>
<keyword id="KW-0342">GTP-binding</keyword>
<keyword id="KW-0460">Magnesium</keyword>
<keyword id="KW-0547">Nucleotide-binding</keyword>
<keyword id="KW-1185">Reference proteome</keyword>
<keyword id="KW-0808">Transferase</keyword>
<reference key="1">
    <citation type="journal article" date="1992" name="Eur. J. Biochem.">
        <title>Characterization of the upp gene encoding uracil phosphoribosyltransferase of Escherichia coli K12.</title>
        <authorList>
            <person name="Anderson P.S."/>
            <person name="Smith J.M."/>
            <person name="Mygind B."/>
        </authorList>
    </citation>
    <scope>NUCLEOTIDE SEQUENCE [GENOMIC DNA]</scope>
    <source>
        <strain>K12</strain>
    </source>
</reference>
<reference key="2">
    <citation type="journal article" date="1997" name="DNA Res.">
        <title>Construction of a contiguous 874-kb sequence of the Escherichia coli-K12 genome corresponding to 50.0-68.8 min on the linkage map and analysis of its sequence features.</title>
        <authorList>
            <person name="Yamamoto Y."/>
            <person name="Aiba H."/>
            <person name="Baba T."/>
            <person name="Hayashi K."/>
            <person name="Inada T."/>
            <person name="Isono K."/>
            <person name="Itoh T."/>
            <person name="Kimura S."/>
            <person name="Kitagawa M."/>
            <person name="Makino K."/>
            <person name="Miki T."/>
            <person name="Mitsuhashi N."/>
            <person name="Mizobuchi K."/>
            <person name="Mori H."/>
            <person name="Nakade S."/>
            <person name="Nakamura Y."/>
            <person name="Nashimoto H."/>
            <person name="Oshima T."/>
            <person name="Oyama S."/>
            <person name="Saito N."/>
            <person name="Sampei G."/>
            <person name="Satoh Y."/>
            <person name="Sivasundaram S."/>
            <person name="Tagami H."/>
            <person name="Takahashi H."/>
            <person name="Takeda J."/>
            <person name="Takemoto K."/>
            <person name="Uehara K."/>
            <person name="Wada C."/>
            <person name="Yamagata S."/>
            <person name="Horiuchi T."/>
        </authorList>
    </citation>
    <scope>NUCLEOTIDE SEQUENCE [LARGE SCALE GENOMIC DNA]</scope>
    <source>
        <strain>K12 / W3110 / ATCC 27325 / DSM 5911</strain>
    </source>
</reference>
<reference key="3">
    <citation type="journal article" date="1997" name="Science">
        <title>The complete genome sequence of Escherichia coli K-12.</title>
        <authorList>
            <person name="Blattner F.R."/>
            <person name="Plunkett G. III"/>
            <person name="Bloch C.A."/>
            <person name="Perna N.T."/>
            <person name="Burland V."/>
            <person name="Riley M."/>
            <person name="Collado-Vides J."/>
            <person name="Glasner J.D."/>
            <person name="Rode C.K."/>
            <person name="Mayhew G.F."/>
            <person name="Gregor J."/>
            <person name="Davis N.W."/>
            <person name="Kirkpatrick H.A."/>
            <person name="Goeden M.A."/>
            <person name="Rose D.J."/>
            <person name="Mau B."/>
            <person name="Shao Y."/>
        </authorList>
    </citation>
    <scope>NUCLEOTIDE SEQUENCE [LARGE SCALE GENOMIC DNA]</scope>
    <source>
        <strain>K12 / MG1655 / ATCC 47076</strain>
    </source>
</reference>
<reference key="4">
    <citation type="journal article" date="2006" name="Mol. Syst. Biol.">
        <title>Highly accurate genome sequences of Escherichia coli K-12 strains MG1655 and W3110.</title>
        <authorList>
            <person name="Hayashi K."/>
            <person name="Morooka N."/>
            <person name="Yamamoto Y."/>
            <person name="Fujita K."/>
            <person name="Isono K."/>
            <person name="Choi S."/>
            <person name="Ohtsubo E."/>
            <person name="Baba T."/>
            <person name="Wanner B.L."/>
            <person name="Mori H."/>
            <person name="Horiuchi T."/>
        </authorList>
    </citation>
    <scope>NUCLEOTIDE SEQUENCE [LARGE SCALE GENOMIC DNA]</scope>
    <source>
        <strain>K12 / W3110 / ATCC 27325 / DSM 5911</strain>
    </source>
</reference>
<reference key="5">
    <citation type="journal article" date="1997" name="Electrophoresis">
        <title>Comparing the predicted and observed properties of proteins encoded in the genome of Escherichia coli K-12.</title>
        <authorList>
            <person name="Link A.J."/>
            <person name="Robison K."/>
            <person name="Church G.M."/>
        </authorList>
    </citation>
    <scope>PROTEIN SEQUENCE OF 1-13</scope>
    <source>
        <strain>K12 / EMG2</strain>
    </source>
</reference>
<reference key="6">
    <citation type="submission" date="1996-02" db="UniProtKB">
        <authorList>
            <person name="Frutiger S."/>
            <person name="Hughes G.J."/>
            <person name="Pasquali C."/>
            <person name="Hochstrasser D.F."/>
        </authorList>
    </citation>
    <scope>PROTEIN SEQUENCE OF 1-11</scope>
    <source>
        <strain>K12 / W3110 / ATCC 27325 / DSM 5911</strain>
    </source>
</reference>
<reference key="7">
    <citation type="journal article" date="1996" name="Eur. J. Biochem.">
        <title>Different oligomeric states are involved in the allosteric behavior of uracil phosphoribosyltransferase from Escherichia coli.</title>
        <authorList>
            <person name="Jensen K.F."/>
            <person name="Mygind B."/>
        </authorList>
    </citation>
    <scope>CATALYTIC ACTIVITY</scope>
    <scope>CHARACTERIZATION</scope>
    <scope>ACTIVITY REGULATION</scope>
    <scope>SUBUNIT</scope>
</reference>
<reference key="8">
    <citation type="journal article" date="1999" name="Biochemistry">
        <title>Kinetic mechanism of uracil phosphoribosyltransferase from Escherichia coli and catalytic importance of the conserved proline in the PRPP binding site.</title>
        <authorList>
            <person name="Lundegaard C."/>
            <person name="Jensen K.F."/>
        </authorList>
    </citation>
    <scope>MUTAGENESIS OF PRO-131</scope>
    <scope>BIOPHYSICOCHEMICAL PROPERTIES</scope>
</reference>
<reference key="9">
    <citation type="submission" date="2009-02" db="PDB data bank">
        <title>Structure of uracil phosphoribosyl transferase.</title>
        <authorList>
            <consortium name="RIKEN structural genomics initiative (RSGI)"/>
        </authorList>
    </citation>
    <scope>X-RAY CRYSTALLOGRAPHY (2.8 ANGSTROMS) OF 2-208</scope>
</reference>
<proteinExistence type="evidence at protein level"/>
<evidence type="ECO:0000250" key="1"/>
<evidence type="ECO:0000269" key="2">
    <source>
    </source>
</evidence>
<evidence type="ECO:0000269" key="3">
    <source>
    </source>
</evidence>
<evidence type="ECO:0000305" key="4"/>
<evidence type="ECO:0007829" key="5">
    <source>
        <dbReference type="PDB" id="2EHJ"/>
    </source>
</evidence>
<name>UPP_ECOLI</name>
<sequence length="208" mass="22533">MKIVEVKHPLVKHKLGLMREQDISTKRFRELASEVGSLLTYEATADLETEKVTIEGWNGPVEIDQIKGKKITVVPILRAGLGMMDGVLENVPSARISVVGMYRNEETLEPVPYFQKLVSNIDERMALIVDPMLATGGSVIATIDLLKKAGCSSIKVLVLVAAPEGIAALEKAHPDVELYTASIDQGLNEHGYIIPGLGDAGDKIFGTK</sequence>
<feature type="chain" id="PRO_0000120824" description="Uracil phosphoribosyltransferase">
    <location>
        <begin position="1"/>
        <end position="208"/>
    </location>
</feature>
<feature type="binding site" evidence="1">
    <location>
        <position position="78"/>
    </location>
    <ligand>
        <name>5-phospho-alpha-D-ribose 1-diphosphate</name>
        <dbReference type="ChEBI" id="CHEBI:58017"/>
    </ligand>
</feature>
<feature type="binding site" evidence="1">
    <location>
        <position position="103"/>
    </location>
    <ligand>
        <name>5-phospho-alpha-D-ribose 1-diphosphate</name>
        <dbReference type="ChEBI" id="CHEBI:58017"/>
    </ligand>
</feature>
<feature type="binding site" evidence="1">
    <location>
        <begin position="130"/>
        <end position="138"/>
    </location>
    <ligand>
        <name>5-phospho-alpha-D-ribose 1-diphosphate</name>
        <dbReference type="ChEBI" id="CHEBI:58017"/>
    </ligand>
</feature>
<feature type="binding site" evidence="1">
    <location>
        <position position="193"/>
    </location>
    <ligand>
        <name>uracil</name>
        <dbReference type="ChEBI" id="CHEBI:17568"/>
    </ligand>
</feature>
<feature type="binding site" evidence="1">
    <location>
        <begin position="198"/>
        <end position="200"/>
    </location>
    <ligand>
        <name>uracil</name>
        <dbReference type="ChEBI" id="CHEBI:17568"/>
    </ligand>
</feature>
<feature type="binding site" evidence="1">
    <location>
        <position position="199"/>
    </location>
    <ligand>
        <name>5-phospho-alpha-D-ribose 1-diphosphate</name>
        <dbReference type="ChEBI" id="CHEBI:58017"/>
    </ligand>
</feature>
<feature type="mutagenesis site" description="60-fold reduction of the catalytic rate, and large decrease in uracil-binding affinity." evidence="2">
    <original>P</original>
    <variation>D</variation>
    <location>
        <position position="131"/>
    </location>
</feature>
<feature type="strand" evidence="5">
    <location>
        <begin position="2"/>
        <end position="5"/>
    </location>
</feature>
<feature type="helix" evidence="5">
    <location>
        <begin position="9"/>
        <end position="19"/>
    </location>
</feature>
<feature type="helix" evidence="5">
    <location>
        <begin position="25"/>
        <end position="43"/>
    </location>
</feature>
<feature type="turn" evidence="5">
    <location>
        <begin position="44"/>
        <end position="46"/>
    </location>
</feature>
<feature type="strand" evidence="5">
    <location>
        <begin position="49"/>
        <end position="56"/>
    </location>
</feature>
<feature type="strand" evidence="5">
    <location>
        <begin position="59"/>
        <end position="66"/>
    </location>
</feature>
<feature type="strand" evidence="5">
    <location>
        <begin position="72"/>
        <end position="76"/>
    </location>
</feature>
<feature type="helix" evidence="5">
    <location>
        <begin position="79"/>
        <end position="83"/>
    </location>
</feature>
<feature type="helix" evidence="5">
    <location>
        <begin position="84"/>
        <end position="90"/>
    </location>
</feature>
<feature type="strand" evidence="5">
    <location>
        <begin position="98"/>
        <end position="103"/>
    </location>
</feature>
<feature type="turn" evidence="5">
    <location>
        <begin position="105"/>
        <end position="107"/>
    </location>
</feature>
<feature type="strand" evidence="5">
    <location>
        <begin position="110"/>
        <end position="116"/>
    </location>
</feature>
<feature type="helix" evidence="5">
    <location>
        <begin position="121"/>
        <end position="123"/>
    </location>
</feature>
<feature type="strand" evidence="5">
    <location>
        <begin position="125"/>
        <end position="135"/>
    </location>
</feature>
<feature type="helix" evidence="5">
    <location>
        <begin position="137"/>
        <end position="148"/>
    </location>
</feature>
<feature type="strand" evidence="5">
    <location>
        <begin position="153"/>
        <end position="161"/>
    </location>
</feature>
<feature type="helix" evidence="5">
    <location>
        <begin position="163"/>
        <end position="172"/>
    </location>
</feature>
<feature type="strand" evidence="5">
    <location>
        <begin position="176"/>
        <end position="181"/>
    </location>
</feature>
<feature type="strand" evidence="5">
    <location>
        <begin position="185"/>
        <end position="187"/>
    </location>
</feature>
<feature type="strand" evidence="5">
    <location>
        <begin position="193"/>
        <end position="195"/>
    </location>
</feature>
<feature type="helix" evidence="5">
    <location>
        <begin position="200"/>
        <end position="205"/>
    </location>
</feature>